<comment type="function">
    <text evidence="1">Allows the formation of correctly charged Gln-tRNA(Gln) through the transamidation of misacylated Glu-tRNA(Gln) in organisms which lack glutaminyl-tRNA synthetase. The reaction takes place in the presence of glutamine and ATP through an activated gamma-phospho-Glu-tRNA(Gln). The GatDE system is specific for glutamate and does not act on aspartate.</text>
</comment>
<comment type="catalytic activity">
    <reaction evidence="1">
        <text>L-glutamyl-tRNA(Gln) + L-glutamine + ATP + H2O = L-glutaminyl-tRNA(Gln) + L-glutamate + ADP + phosphate + H(+)</text>
        <dbReference type="Rhea" id="RHEA:17521"/>
        <dbReference type="Rhea" id="RHEA-COMP:9681"/>
        <dbReference type="Rhea" id="RHEA-COMP:9684"/>
        <dbReference type="ChEBI" id="CHEBI:15377"/>
        <dbReference type="ChEBI" id="CHEBI:15378"/>
        <dbReference type="ChEBI" id="CHEBI:29985"/>
        <dbReference type="ChEBI" id="CHEBI:30616"/>
        <dbReference type="ChEBI" id="CHEBI:43474"/>
        <dbReference type="ChEBI" id="CHEBI:58359"/>
        <dbReference type="ChEBI" id="CHEBI:78520"/>
        <dbReference type="ChEBI" id="CHEBI:78521"/>
        <dbReference type="ChEBI" id="CHEBI:456216"/>
    </reaction>
</comment>
<comment type="subunit">
    <text evidence="1">Heterodimer of GatD and GatE.</text>
</comment>
<comment type="similarity">
    <text evidence="1">Belongs to the asparaginase 1 family. GatD subfamily.</text>
</comment>
<evidence type="ECO:0000255" key="1">
    <source>
        <dbReference type="HAMAP-Rule" id="MF_00586"/>
    </source>
</evidence>
<evidence type="ECO:0000255" key="2">
    <source>
        <dbReference type="PROSITE-ProRule" id="PRU01068"/>
    </source>
</evidence>
<proteinExistence type="inferred from homology"/>
<reference key="1">
    <citation type="submission" date="2007-10" db="EMBL/GenBank/DDBJ databases">
        <title>Complete sequence of Methanococcus maripaludis C6.</title>
        <authorList>
            <consortium name="US DOE Joint Genome Institute"/>
            <person name="Copeland A."/>
            <person name="Lucas S."/>
            <person name="Lapidus A."/>
            <person name="Barry K."/>
            <person name="Glavina del Rio T."/>
            <person name="Dalin E."/>
            <person name="Tice H."/>
            <person name="Pitluck S."/>
            <person name="Clum A."/>
            <person name="Schmutz J."/>
            <person name="Larimer F."/>
            <person name="Land M."/>
            <person name="Hauser L."/>
            <person name="Kyrpides N."/>
            <person name="Mikhailova N."/>
            <person name="Sieprawska-Lupa M."/>
            <person name="Whitman W.B."/>
            <person name="Richardson P."/>
        </authorList>
    </citation>
    <scope>NUCLEOTIDE SEQUENCE [LARGE SCALE GENOMIC DNA]</scope>
    <source>
        <strain>C6 / ATCC BAA-1332</strain>
    </source>
</reference>
<feature type="chain" id="PRO_1000129779" description="Glutamyl-tRNA(Gln) amidotransferase subunit D">
    <location>
        <begin position="1"/>
        <end position="418"/>
    </location>
</feature>
<feature type="domain" description="Asparaginase/glutaminase" evidence="2">
    <location>
        <begin position="74"/>
        <end position="405"/>
    </location>
</feature>
<feature type="active site" evidence="1">
    <location>
        <position position="84"/>
    </location>
</feature>
<feature type="active site" evidence="1">
    <location>
        <position position="160"/>
    </location>
</feature>
<feature type="active site" evidence="1">
    <location>
        <position position="161"/>
    </location>
</feature>
<feature type="active site" evidence="1">
    <location>
        <position position="237"/>
    </location>
</feature>
<gene>
    <name evidence="1" type="primary">gatD</name>
    <name type="ordered locus">MmarC6_1406</name>
</gene>
<organism>
    <name type="scientific">Methanococcus maripaludis (strain C6 / ATCC BAA-1332)</name>
    <dbReference type="NCBI Taxonomy" id="444158"/>
    <lineage>
        <taxon>Archaea</taxon>
        <taxon>Methanobacteriati</taxon>
        <taxon>Methanobacteriota</taxon>
        <taxon>Methanomada group</taxon>
        <taxon>Methanococci</taxon>
        <taxon>Methanococcales</taxon>
        <taxon>Methanococcaceae</taxon>
        <taxon>Methanococcus</taxon>
    </lineage>
</organism>
<sequence length="418" mass="45958">MDIGDFVKLELENTTYSGTLMPSLNENTIVIKMKSGYNVGLDKKKIKNIEILESGDKPKYGLPPLNLEKNPKLKNISILSTGGTVASRVDYKTGAVHPAFTADDLIRAVPELMDVANIKGKVILNILSENMLPKYWAMTAEAIKEEIENGAEGIVIAHGTDTMHYTASALSFMVTSEVPIILVGAQRSSDRPSSDAALNIIAAVKAATEPIKGVYVLMHGETGDTVCHLHEGTKVRKLHSSRRDAFKSVNKTPIAEVNPVTKEVKYLRDVKSRDKSKIKEVVLNTNLEEKVALIKVYPGIDSEILKFYVDNGYKGIILEGTGLGHTPETFFEGIDYANENNVLVAMTTQTINGRVNMNVYSNGRELQAKGVIPCEDMLSEVAFVKLMHLLGNYEFEEAKELMPKNIAGEINESINLEC</sequence>
<keyword id="KW-0067">ATP-binding</keyword>
<keyword id="KW-0436">Ligase</keyword>
<keyword id="KW-0547">Nucleotide-binding</keyword>
<keyword id="KW-0648">Protein biosynthesis</keyword>
<protein>
    <recommendedName>
        <fullName evidence="1">Glutamyl-tRNA(Gln) amidotransferase subunit D</fullName>
        <shortName evidence="1">Glu-ADT subunit D</shortName>
        <ecNumber evidence="1">6.3.5.-</ecNumber>
    </recommendedName>
</protein>
<name>GATD_METM6</name>
<dbReference type="EC" id="6.3.5.-" evidence="1"/>
<dbReference type="EMBL" id="CP000867">
    <property type="protein sequence ID" value="ABX02219.1"/>
    <property type="molecule type" value="Genomic_DNA"/>
</dbReference>
<dbReference type="SMR" id="A9AA46"/>
<dbReference type="STRING" id="444158.MmarC6_1406"/>
<dbReference type="KEGG" id="mmx:MmarC6_1406"/>
<dbReference type="eggNOG" id="arCOG01924">
    <property type="taxonomic scope" value="Archaea"/>
</dbReference>
<dbReference type="HOGENOM" id="CLU_019134_2_1_2"/>
<dbReference type="OrthoDB" id="371959at2157"/>
<dbReference type="PhylomeDB" id="A9AA46"/>
<dbReference type="GO" id="GO:0004067">
    <property type="term" value="F:asparaginase activity"/>
    <property type="evidence" value="ECO:0007669"/>
    <property type="project" value="InterPro"/>
</dbReference>
<dbReference type="GO" id="GO:0005524">
    <property type="term" value="F:ATP binding"/>
    <property type="evidence" value="ECO:0007669"/>
    <property type="project" value="UniProtKB-KW"/>
</dbReference>
<dbReference type="GO" id="GO:0050567">
    <property type="term" value="F:glutaminyl-tRNA synthase (glutamine-hydrolyzing) activity"/>
    <property type="evidence" value="ECO:0007669"/>
    <property type="project" value="UniProtKB-UniRule"/>
</dbReference>
<dbReference type="GO" id="GO:0006520">
    <property type="term" value="P:amino acid metabolic process"/>
    <property type="evidence" value="ECO:0007669"/>
    <property type="project" value="InterPro"/>
</dbReference>
<dbReference type="GO" id="GO:0006450">
    <property type="term" value="P:regulation of translational fidelity"/>
    <property type="evidence" value="ECO:0007669"/>
    <property type="project" value="InterPro"/>
</dbReference>
<dbReference type="GO" id="GO:0006412">
    <property type="term" value="P:translation"/>
    <property type="evidence" value="ECO:0007669"/>
    <property type="project" value="UniProtKB-UniRule"/>
</dbReference>
<dbReference type="CDD" id="cd08962">
    <property type="entry name" value="GatD"/>
    <property type="match status" value="1"/>
</dbReference>
<dbReference type="FunFam" id="3.40.50.1170:FF:000001">
    <property type="entry name" value="L-asparaginase 2"/>
    <property type="match status" value="1"/>
</dbReference>
<dbReference type="Gene3D" id="2.30.30.520">
    <property type="match status" value="1"/>
</dbReference>
<dbReference type="Gene3D" id="3.40.50.40">
    <property type="match status" value="1"/>
</dbReference>
<dbReference type="Gene3D" id="3.40.50.1170">
    <property type="entry name" value="L-asparaginase, N-terminal domain"/>
    <property type="match status" value="1"/>
</dbReference>
<dbReference type="HAMAP" id="MF_00586">
    <property type="entry name" value="GatD"/>
    <property type="match status" value="1"/>
</dbReference>
<dbReference type="InterPro" id="IPR006033">
    <property type="entry name" value="AsnA_fam"/>
</dbReference>
<dbReference type="InterPro" id="IPR036152">
    <property type="entry name" value="Asp/glu_Ase-like_sf"/>
</dbReference>
<dbReference type="InterPro" id="IPR006034">
    <property type="entry name" value="Asparaginase/glutaminase-like"/>
</dbReference>
<dbReference type="InterPro" id="IPR020827">
    <property type="entry name" value="Asparaginase/glutaminase_AS1"/>
</dbReference>
<dbReference type="InterPro" id="IPR027475">
    <property type="entry name" value="Asparaginase/glutaminase_AS2"/>
</dbReference>
<dbReference type="InterPro" id="IPR040919">
    <property type="entry name" value="Asparaginase_C"/>
</dbReference>
<dbReference type="InterPro" id="IPR011878">
    <property type="entry name" value="GatD"/>
</dbReference>
<dbReference type="InterPro" id="IPR040918">
    <property type="entry name" value="GatD_N"/>
</dbReference>
<dbReference type="InterPro" id="IPR037222">
    <property type="entry name" value="GatD_N_sf"/>
</dbReference>
<dbReference type="InterPro" id="IPR027473">
    <property type="entry name" value="L-asparaginase_C"/>
</dbReference>
<dbReference type="InterPro" id="IPR027474">
    <property type="entry name" value="L-asparaginase_N"/>
</dbReference>
<dbReference type="InterPro" id="IPR037152">
    <property type="entry name" value="L-asparaginase_N_sf"/>
</dbReference>
<dbReference type="NCBIfam" id="TIGR00519">
    <property type="entry name" value="asnASE_I"/>
    <property type="match status" value="1"/>
</dbReference>
<dbReference type="NCBIfam" id="TIGR02153">
    <property type="entry name" value="gatD_arch"/>
    <property type="match status" value="1"/>
</dbReference>
<dbReference type="NCBIfam" id="NF003217">
    <property type="entry name" value="PRK04183.1"/>
    <property type="match status" value="1"/>
</dbReference>
<dbReference type="PANTHER" id="PTHR11707:SF28">
    <property type="entry name" value="60 KDA LYSOPHOSPHOLIPASE"/>
    <property type="match status" value="1"/>
</dbReference>
<dbReference type="PANTHER" id="PTHR11707">
    <property type="entry name" value="L-ASPARAGINASE"/>
    <property type="match status" value="1"/>
</dbReference>
<dbReference type="Pfam" id="PF00710">
    <property type="entry name" value="Asparaginase"/>
    <property type="match status" value="1"/>
</dbReference>
<dbReference type="Pfam" id="PF17763">
    <property type="entry name" value="Asparaginase_C"/>
    <property type="match status" value="1"/>
</dbReference>
<dbReference type="Pfam" id="PF18195">
    <property type="entry name" value="GatD_N"/>
    <property type="match status" value="1"/>
</dbReference>
<dbReference type="PIRSF" id="PIRSF500175">
    <property type="entry name" value="Glu_ADT_D"/>
    <property type="match status" value="1"/>
</dbReference>
<dbReference type="PIRSF" id="PIRSF001220">
    <property type="entry name" value="L-ASNase_gatD"/>
    <property type="match status" value="1"/>
</dbReference>
<dbReference type="PRINTS" id="PR00139">
    <property type="entry name" value="ASNGLNASE"/>
</dbReference>
<dbReference type="SMART" id="SM00870">
    <property type="entry name" value="Asparaginase"/>
    <property type="match status" value="1"/>
</dbReference>
<dbReference type="SUPFAM" id="SSF141300">
    <property type="entry name" value="GatD N-terminal domain-like"/>
    <property type="match status" value="1"/>
</dbReference>
<dbReference type="SUPFAM" id="SSF53774">
    <property type="entry name" value="Glutaminase/Asparaginase"/>
    <property type="match status" value="1"/>
</dbReference>
<dbReference type="PROSITE" id="PS00144">
    <property type="entry name" value="ASN_GLN_ASE_1"/>
    <property type="match status" value="1"/>
</dbReference>
<dbReference type="PROSITE" id="PS00917">
    <property type="entry name" value="ASN_GLN_ASE_2"/>
    <property type="match status" value="1"/>
</dbReference>
<dbReference type="PROSITE" id="PS51732">
    <property type="entry name" value="ASN_GLN_ASE_3"/>
    <property type="match status" value="1"/>
</dbReference>
<accession>A9AA46</accession>